<reference key="1">
    <citation type="submission" date="2005-03" db="EMBL/GenBank/DDBJ databases">
        <title>Brevibacillus brevis strain 47, complete genome.</title>
        <authorList>
            <person name="Hosoyama A."/>
            <person name="Yamada R."/>
            <person name="Hongo Y."/>
            <person name="Terui Y."/>
            <person name="Ankai A."/>
            <person name="Masuyama W."/>
            <person name="Sekiguchi M."/>
            <person name="Takeda T."/>
            <person name="Asano K."/>
            <person name="Ohji S."/>
            <person name="Ichikawa N."/>
            <person name="Narita S."/>
            <person name="Aoki N."/>
            <person name="Miura H."/>
            <person name="Matsushita S."/>
            <person name="Sekigawa T."/>
            <person name="Yamagata H."/>
            <person name="Yoshikawa H."/>
            <person name="Udaka S."/>
            <person name="Tanikawa S."/>
            <person name="Fujita N."/>
        </authorList>
    </citation>
    <scope>NUCLEOTIDE SEQUENCE [LARGE SCALE GENOMIC DNA]</scope>
    <source>
        <strain>47 / JCM 6285 / NBRC 100599</strain>
    </source>
</reference>
<evidence type="ECO:0000255" key="1">
    <source>
        <dbReference type="HAMAP-Rule" id="MF_00453"/>
    </source>
</evidence>
<sequence>METNTVQKLTDILGATKVYHNLPVANLVEMAVKRGEGILTDKGALNALTGKFTGRSPKDKFVVDEASVHDKINWGPVNQPISTEKFQALQQDVLQYLQSKDELFVFDGFAGADTTYRLPIRVVNEFAWHNLFARQLFIRPSEEELAAHESEFTVIYAPNFKANPAVHGTNSETFIVLSFEQKTVLIGGTEYAGEMKKSIFSVMNMLLPERNVLPMHCSANVGKDGDVALFFGLSGTGKTTLSADPDRFLIGDDEHGWSDNGVFNIEGGCYAKCVKLSEEGEPQIWKAIQFGTVLENVDVNEATRVADYDSTKYTENTRAAYPVEAIPGAVIPGVGGQPNVIVFLTADSFGVLPPISKLNKEQAMYHFLSGYTSKMAGTERGVTAPQTEFSTCFGSPFLPLHPVVYAEMLGKKIDERKVQVYLVNTGWTGGPVGVGQRMKLSYTRAMVTAALNGELEKVDYVADEIFGVQVPTSCPNVPAEVLQPRNTWANKEDYDKQAADLAARFIENFEKKFPNAADIANAGPKVK</sequence>
<feature type="chain" id="PRO_1000192311" description="Phosphoenolpyruvate carboxykinase (ATP)">
    <location>
        <begin position="1"/>
        <end position="527"/>
    </location>
</feature>
<feature type="binding site" evidence="1">
    <location>
        <position position="55"/>
    </location>
    <ligand>
        <name>substrate</name>
    </ligand>
</feature>
<feature type="binding site" evidence="1">
    <location>
        <position position="191"/>
    </location>
    <ligand>
        <name>substrate</name>
    </ligand>
</feature>
<feature type="binding site" evidence="1">
    <location>
        <position position="197"/>
    </location>
    <ligand>
        <name>ATP</name>
        <dbReference type="ChEBI" id="CHEBI:30616"/>
    </ligand>
</feature>
<feature type="binding site" evidence="1">
    <location>
        <position position="197"/>
    </location>
    <ligand>
        <name>Mn(2+)</name>
        <dbReference type="ChEBI" id="CHEBI:29035"/>
    </ligand>
</feature>
<feature type="binding site" evidence="1">
    <location>
        <position position="197"/>
    </location>
    <ligand>
        <name>substrate</name>
    </ligand>
</feature>
<feature type="binding site" evidence="1">
    <location>
        <position position="216"/>
    </location>
    <ligand>
        <name>ATP</name>
        <dbReference type="ChEBI" id="CHEBI:30616"/>
    </ligand>
</feature>
<feature type="binding site" evidence="1">
    <location>
        <position position="216"/>
    </location>
    <ligand>
        <name>Mn(2+)</name>
        <dbReference type="ChEBI" id="CHEBI:29035"/>
    </ligand>
</feature>
<feature type="binding site" evidence="1">
    <location>
        <begin position="232"/>
        <end position="240"/>
    </location>
    <ligand>
        <name>ATP</name>
        <dbReference type="ChEBI" id="CHEBI:30616"/>
    </ligand>
</feature>
<feature type="binding site" evidence="1">
    <location>
        <position position="253"/>
    </location>
    <ligand>
        <name>Mn(2+)</name>
        <dbReference type="ChEBI" id="CHEBI:29035"/>
    </ligand>
</feature>
<feature type="binding site" evidence="1">
    <location>
        <position position="281"/>
    </location>
    <ligand>
        <name>ATP</name>
        <dbReference type="ChEBI" id="CHEBI:30616"/>
    </ligand>
</feature>
<feature type="binding site" evidence="1">
    <location>
        <position position="318"/>
    </location>
    <ligand>
        <name>ATP</name>
        <dbReference type="ChEBI" id="CHEBI:30616"/>
    </ligand>
</feature>
<feature type="binding site" evidence="1">
    <location>
        <position position="318"/>
    </location>
    <ligand>
        <name>substrate</name>
    </ligand>
</feature>
<feature type="binding site" evidence="1">
    <location>
        <position position="443"/>
    </location>
    <ligand>
        <name>ATP</name>
        <dbReference type="ChEBI" id="CHEBI:30616"/>
    </ligand>
</feature>
<gene>
    <name evidence="1" type="primary">pckA</name>
    <name type="ordered locus">BBR47_48590</name>
</gene>
<organism>
    <name type="scientific">Brevibacillus brevis (strain 47 / JCM 6285 / NBRC 100599)</name>
    <dbReference type="NCBI Taxonomy" id="358681"/>
    <lineage>
        <taxon>Bacteria</taxon>
        <taxon>Bacillati</taxon>
        <taxon>Bacillota</taxon>
        <taxon>Bacilli</taxon>
        <taxon>Bacillales</taxon>
        <taxon>Paenibacillaceae</taxon>
        <taxon>Brevibacillus</taxon>
    </lineage>
</organism>
<keyword id="KW-0067">ATP-binding</keyword>
<keyword id="KW-0963">Cytoplasm</keyword>
<keyword id="KW-0210">Decarboxylase</keyword>
<keyword id="KW-0312">Gluconeogenesis</keyword>
<keyword id="KW-0456">Lyase</keyword>
<keyword id="KW-0464">Manganese</keyword>
<keyword id="KW-0479">Metal-binding</keyword>
<keyword id="KW-0547">Nucleotide-binding</keyword>
<keyword id="KW-1185">Reference proteome</keyword>
<dbReference type="EC" id="4.1.1.49" evidence="1"/>
<dbReference type="EMBL" id="AP008955">
    <property type="protein sequence ID" value="BAH45836.1"/>
    <property type="molecule type" value="Genomic_DNA"/>
</dbReference>
<dbReference type="RefSeq" id="WP_015893096.1">
    <property type="nucleotide sequence ID" value="NC_012491.1"/>
</dbReference>
<dbReference type="SMR" id="C0ZL09"/>
<dbReference type="STRING" id="358681.BBR47_48590"/>
<dbReference type="KEGG" id="bbe:BBR47_48590"/>
<dbReference type="eggNOG" id="COG1866">
    <property type="taxonomic scope" value="Bacteria"/>
</dbReference>
<dbReference type="HOGENOM" id="CLU_018247_0_1_9"/>
<dbReference type="UniPathway" id="UPA00138"/>
<dbReference type="Proteomes" id="UP000001877">
    <property type="component" value="Chromosome"/>
</dbReference>
<dbReference type="GO" id="GO:0005829">
    <property type="term" value="C:cytosol"/>
    <property type="evidence" value="ECO:0007669"/>
    <property type="project" value="TreeGrafter"/>
</dbReference>
<dbReference type="GO" id="GO:0005524">
    <property type="term" value="F:ATP binding"/>
    <property type="evidence" value="ECO:0007669"/>
    <property type="project" value="UniProtKB-UniRule"/>
</dbReference>
<dbReference type="GO" id="GO:0046872">
    <property type="term" value="F:metal ion binding"/>
    <property type="evidence" value="ECO:0007669"/>
    <property type="project" value="UniProtKB-KW"/>
</dbReference>
<dbReference type="GO" id="GO:0004612">
    <property type="term" value="F:phosphoenolpyruvate carboxykinase (ATP) activity"/>
    <property type="evidence" value="ECO:0007669"/>
    <property type="project" value="UniProtKB-UniRule"/>
</dbReference>
<dbReference type="GO" id="GO:0006094">
    <property type="term" value="P:gluconeogenesis"/>
    <property type="evidence" value="ECO:0007669"/>
    <property type="project" value="UniProtKB-UniRule"/>
</dbReference>
<dbReference type="CDD" id="cd00484">
    <property type="entry name" value="PEPCK_ATP"/>
    <property type="match status" value="1"/>
</dbReference>
<dbReference type="FunFam" id="3.40.449.10:FF:000001">
    <property type="entry name" value="Phosphoenolpyruvate carboxykinase (ATP)"/>
    <property type="match status" value="1"/>
</dbReference>
<dbReference type="Gene3D" id="3.90.228.20">
    <property type="match status" value="1"/>
</dbReference>
<dbReference type="Gene3D" id="3.40.449.10">
    <property type="entry name" value="Phosphoenolpyruvate Carboxykinase, domain 1"/>
    <property type="match status" value="1"/>
</dbReference>
<dbReference type="Gene3D" id="2.170.8.10">
    <property type="entry name" value="Phosphoenolpyruvate Carboxykinase, domain 2"/>
    <property type="match status" value="1"/>
</dbReference>
<dbReference type="HAMAP" id="MF_00453">
    <property type="entry name" value="PEPCK_ATP"/>
    <property type="match status" value="1"/>
</dbReference>
<dbReference type="InterPro" id="IPR001272">
    <property type="entry name" value="PEP_carboxykinase_ATP"/>
</dbReference>
<dbReference type="InterPro" id="IPR013035">
    <property type="entry name" value="PEP_carboxykinase_C"/>
</dbReference>
<dbReference type="InterPro" id="IPR008210">
    <property type="entry name" value="PEP_carboxykinase_N"/>
</dbReference>
<dbReference type="InterPro" id="IPR015994">
    <property type="entry name" value="PEPCK_ATP_CS"/>
</dbReference>
<dbReference type="NCBIfam" id="TIGR00224">
    <property type="entry name" value="pckA"/>
    <property type="match status" value="1"/>
</dbReference>
<dbReference type="NCBIfam" id="NF006820">
    <property type="entry name" value="PRK09344.1-2"/>
    <property type="match status" value="1"/>
</dbReference>
<dbReference type="NCBIfam" id="NF006821">
    <property type="entry name" value="PRK09344.1-3"/>
    <property type="match status" value="1"/>
</dbReference>
<dbReference type="PANTHER" id="PTHR30031:SF0">
    <property type="entry name" value="PHOSPHOENOLPYRUVATE CARBOXYKINASE (ATP)"/>
    <property type="match status" value="1"/>
</dbReference>
<dbReference type="PANTHER" id="PTHR30031">
    <property type="entry name" value="PHOSPHOENOLPYRUVATE CARBOXYKINASE ATP"/>
    <property type="match status" value="1"/>
</dbReference>
<dbReference type="Pfam" id="PF01293">
    <property type="entry name" value="PEPCK_ATP"/>
    <property type="match status" value="1"/>
</dbReference>
<dbReference type="PIRSF" id="PIRSF006294">
    <property type="entry name" value="PEP_crbxkin"/>
    <property type="match status" value="1"/>
</dbReference>
<dbReference type="SUPFAM" id="SSF68923">
    <property type="entry name" value="PEP carboxykinase N-terminal domain"/>
    <property type="match status" value="1"/>
</dbReference>
<dbReference type="SUPFAM" id="SSF53795">
    <property type="entry name" value="PEP carboxykinase-like"/>
    <property type="match status" value="1"/>
</dbReference>
<dbReference type="PROSITE" id="PS00532">
    <property type="entry name" value="PEPCK_ATP"/>
    <property type="match status" value="1"/>
</dbReference>
<proteinExistence type="inferred from homology"/>
<name>PCKA_BREBN</name>
<protein>
    <recommendedName>
        <fullName evidence="1">Phosphoenolpyruvate carboxykinase (ATP)</fullName>
        <shortName evidence="1">PCK</shortName>
        <shortName evidence="1">PEP carboxykinase</shortName>
        <shortName evidence="1">PEPCK</shortName>
        <ecNumber evidence="1">4.1.1.49</ecNumber>
    </recommendedName>
</protein>
<comment type="function">
    <text evidence="1">Involved in the gluconeogenesis. Catalyzes the conversion of oxaloacetate (OAA) to phosphoenolpyruvate (PEP) through direct phosphoryl transfer between the nucleoside triphosphate and OAA.</text>
</comment>
<comment type="catalytic activity">
    <reaction evidence="1">
        <text>oxaloacetate + ATP = phosphoenolpyruvate + ADP + CO2</text>
        <dbReference type="Rhea" id="RHEA:18617"/>
        <dbReference type="ChEBI" id="CHEBI:16452"/>
        <dbReference type="ChEBI" id="CHEBI:16526"/>
        <dbReference type="ChEBI" id="CHEBI:30616"/>
        <dbReference type="ChEBI" id="CHEBI:58702"/>
        <dbReference type="ChEBI" id="CHEBI:456216"/>
        <dbReference type="EC" id="4.1.1.49"/>
    </reaction>
</comment>
<comment type="cofactor">
    <cofactor evidence="1">
        <name>Mn(2+)</name>
        <dbReference type="ChEBI" id="CHEBI:29035"/>
    </cofactor>
    <text evidence="1">Binds 1 Mn(2+) ion per subunit.</text>
</comment>
<comment type="pathway">
    <text evidence="1">Carbohydrate biosynthesis; gluconeogenesis.</text>
</comment>
<comment type="subcellular location">
    <subcellularLocation>
        <location evidence="1">Cytoplasm</location>
    </subcellularLocation>
</comment>
<comment type="similarity">
    <text evidence="1">Belongs to the phosphoenolpyruvate carboxykinase (ATP) family.</text>
</comment>
<accession>C0ZL09</accession>